<feature type="chain" id="PRO_1000164256" description="Chaperone protein DnaJ">
    <location>
        <begin position="1"/>
        <end position="374"/>
    </location>
</feature>
<feature type="domain" description="J" evidence="1">
    <location>
        <begin position="4"/>
        <end position="68"/>
    </location>
</feature>
<feature type="repeat" description="CXXCXGXG motif">
    <location>
        <begin position="146"/>
        <end position="153"/>
    </location>
</feature>
<feature type="repeat" description="CXXCXGXG motif">
    <location>
        <begin position="163"/>
        <end position="170"/>
    </location>
</feature>
<feature type="repeat" description="CXXCXGXG motif">
    <location>
        <begin position="189"/>
        <end position="196"/>
    </location>
</feature>
<feature type="repeat" description="CXXCXGXG motif">
    <location>
        <begin position="203"/>
        <end position="210"/>
    </location>
</feature>
<feature type="zinc finger region" description="CR-type" evidence="1">
    <location>
        <begin position="133"/>
        <end position="215"/>
    </location>
</feature>
<feature type="binding site" evidence="1">
    <location>
        <position position="146"/>
    </location>
    <ligand>
        <name>Zn(2+)</name>
        <dbReference type="ChEBI" id="CHEBI:29105"/>
        <label>1</label>
    </ligand>
</feature>
<feature type="binding site" evidence="1">
    <location>
        <position position="149"/>
    </location>
    <ligand>
        <name>Zn(2+)</name>
        <dbReference type="ChEBI" id="CHEBI:29105"/>
        <label>1</label>
    </ligand>
</feature>
<feature type="binding site" evidence="1">
    <location>
        <position position="163"/>
    </location>
    <ligand>
        <name>Zn(2+)</name>
        <dbReference type="ChEBI" id="CHEBI:29105"/>
        <label>2</label>
    </ligand>
</feature>
<feature type="binding site" evidence="1">
    <location>
        <position position="166"/>
    </location>
    <ligand>
        <name>Zn(2+)</name>
        <dbReference type="ChEBI" id="CHEBI:29105"/>
        <label>2</label>
    </ligand>
</feature>
<feature type="binding site" evidence="1">
    <location>
        <position position="189"/>
    </location>
    <ligand>
        <name>Zn(2+)</name>
        <dbReference type="ChEBI" id="CHEBI:29105"/>
        <label>2</label>
    </ligand>
</feature>
<feature type="binding site" evidence="1">
    <location>
        <position position="192"/>
    </location>
    <ligand>
        <name>Zn(2+)</name>
        <dbReference type="ChEBI" id="CHEBI:29105"/>
        <label>2</label>
    </ligand>
</feature>
<feature type="binding site" evidence="1">
    <location>
        <position position="203"/>
    </location>
    <ligand>
        <name>Zn(2+)</name>
        <dbReference type="ChEBI" id="CHEBI:29105"/>
        <label>1</label>
    </ligand>
</feature>
<feature type="binding site" evidence="1">
    <location>
        <position position="206"/>
    </location>
    <ligand>
        <name>Zn(2+)</name>
        <dbReference type="ChEBI" id="CHEBI:29105"/>
        <label>1</label>
    </ligand>
</feature>
<accession>B8HLD2</accession>
<sequence>MARDYYDILGVSRDAGQEDLKQAYRRLARKYHPDVNKEAGAEERFKEINRAYEVLSDPETRARYDRFGEAGVSGAAAGYGDMGDMGGFADIFESIFSGFGGVGAGTSRRRTGPSRGDDLRFDLKLEFREAIFGGEKQIRITHLETCTTCNGSGAKPGTKPRTCGTCGGAGQVRRATRTPFGSFTQVSVCPTCNGKGQVIEDKCETCGGNGQAQVTKKLKITIPAGVDTGTRLRVSNEGDAGQQGGPAGDLYVYLFVQEDPEFRREGINILSEVKISYLQAILGSRLMVNTVDGEVELTIPPGTQPNTVLTLENHGVPRLGNPVSRGDHLITVLLEIPTRISAEERELLEKLAKIRGDRIGKGGIEGFFGKVFGG</sequence>
<protein>
    <recommendedName>
        <fullName evidence="1">Chaperone protein DnaJ</fullName>
    </recommendedName>
</protein>
<dbReference type="EMBL" id="CP001344">
    <property type="protein sequence ID" value="ACL46997.1"/>
    <property type="molecule type" value="Genomic_DNA"/>
</dbReference>
<dbReference type="SMR" id="B8HLD2"/>
<dbReference type="STRING" id="395961.Cyan7425_4692"/>
<dbReference type="KEGG" id="cyn:Cyan7425_4692"/>
<dbReference type="eggNOG" id="COG0484">
    <property type="taxonomic scope" value="Bacteria"/>
</dbReference>
<dbReference type="HOGENOM" id="CLU_017633_0_1_3"/>
<dbReference type="OrthoDB" id="9779889at2"/>
<dbReference type="GO" id="GO:0005737">
    <property type="term" value="C:cytoplasm"/>
    <property type="evidence" value="ECO:0007669"/>
    <property type="project" value="UniProtKB-SubCell"/>
</dbReference>
<dbReference type="GO" id="GO:0005524">
    <property type="term" value="F:ATP binding"/>
    <property type="evidence" value="ECO:0007669"/>
    <property type="project" value="InterPro"/>
</dbReference>
<dbReference type="GO" id="GO:0031072">
    <property type="term" value="F:heat shock protein binding"/>
    <property type="evidence" value="ECO:0007669"/>
    <property type="project" value="InterPro"/>
</dbReference>
<dbReference type="GO" id="GO:0051082">
    <property type="term" value="F:unfolded protein binding"/>
    <property type="evidence" value="ECO:0007669"/>
    <property type="project" value="UniProtKB-UniRule"/>
</dbReference>
<dbReference type="GO" id="GO:0008270">
    <property type="term" value="F:zinc ion binding"/>
    <property type="evidence" value="ECO:0007669"/>
    <property type="project" value="UniProtKB-UniRule"/>
</dbReference>
<dbReference type="GO" id="GO:0051085">
    <property type="term" value="P:chaperone cofactor-dependent protein refolding"/>
    <property type="evidence" value="ECO:0007669"/>
    <property type="project" value="TreeGrafter"/>
</dbReference>
<dbReference type="GO" id="GO:0006260">
    <property type="term" value="P:DNA replication"/>
    <property type="evidence" value="ECO:0007669"/>
    <property type="project" value="UniProtKB-KW"/>
</dbReference>
<dbReference type="GO" id="GO:0042026">
    <property type="term" value="P:protein refolding"/>
    <property type="evidence" value="ECO:0007669"/>
    <property type="project" value="TreeGrafter"/>
</dbReference>
<dbReference type="GO" id="GO:0009408">
    <property type="term" value="P:response to heat"/>
    <property type="evidence" value="ECO:0007669"/>
    <property type="project" value="InterPro"/>
</dbReference>
<dbReference type="CDD" id="cd06257">
    <property type="entry name" value="DnaJ"/>
    <property type="match status" value="1"/>
</dbReference>
<dbReference type="CDD" id="cd10747">
    <property type="entry name" value="DnaJ_C"/>
    <property type="match status" value="1"/>
</dbReference>
<dbReference type="CDD" id="cd10719">
    <property type="entry name" value="DnaJ_zf"/>
    <property type="match status" value="1"/>
</dbReference>
<dbReference type="FunFam" id="2.60.260.20:FF:000005">
    <property type="entry name" value="Chaperone protein dnaJ 1, mitochondrial"/>
    <property type="match status" value="1"/>
</dbReference>
<dbReference type="FunFam" id="2.10.230.10:FF:000002">
    <property type="entry name" value="Molecular chaperone DnaJ"/>
    <property type="match status" value="1"/>
</dbReference>
<dbReference type="Gene3D" id="1.10.287.110">
    <property type="entry name" value="DnaJ domain"/>
    <property type="match status" value="1"/>
</dbReference>
<dbReference type="Gene3D" id="2.10.230.10">
    <property type="entry name" value="Heat shock protein DnaJ, cysteine-rich domain"/>
    <property type="match status" value="1"/>
</dbReference>
<dbReference type="Gene3D" id="2.60.260.20">
    <property type="entry name" value="Urease metallochaperone UreE, N-terminal domain"/>
    <property type="match status" value="2"/>
</dbReference>
<dbReference type="HAMAP" id="MF_01152">
    <property type="entry name" value="DnaJ"/>
    <property type="match status" value="1"/>
</dbReference>
<dbReference type="InterPro" id="IPR012724">
    <property type="entry name" value="DnaJ"/>
</dbReference>
<dbReference type="InterPro" id="IPR002939">
    <property type="entry name" value="DnaJ_C"/>
</dbReference>
<dbReference type="InterPro" id="IPR001623">
    <property type="entry name" value="DnaJ_domain"/>
</dbReference>
<dbReference type="InterPro" id="IPR018253">
    <property type="entry name" value="DnaJ_domain_CS"/>
</dbReference>
<dbReference type="InterPro" id="IPR008971">
    <property type="entry name" value="HSP40/DnaJ_pept-bd"/>
</dbReference>
<dbReference type="InterPro" id="IPR001305">
    <property type="entry name" value="HSP_DnaJ_Cys-rich_dom"/>
</dbReference>
<dbReference type="InterPro" id="IPR036410">
    <property type="entry name" value="HSP_DnaJ_Cys-rich_dom_sf"/>
</dbReference>
<dbReference type="InterPro" id="IPR036869">
    <property type="entry name" value="J_dom_sf"/>
</dbReference>
<dbReference type="NCBIfam" id="TIGR02349">
    <property type="entry name" value="DnaJ_bact"/>
    <property type="match status" value="1"/>
</dbReference>
<dbReference type="NCBIfam" id="NF008035">
    <property type="entry name" value="PRK10767.1"/>
    <property type="match status" value="1"/>
</dbReference>
<dbReference type="NCBIfam" id="NF010886">
    <property type="entry name" value="PRK14293.1"/>
    <property type="match status" value="1"/>
</dbReference>
<dbReference type="PANTHER" id="PTHR43096:SF10">
    <property type="entry name" value="CHAPERONE PROTEIN DNAJ A6, CHLOROPLASTIC"/>
    <property type="match status" value="1"/>
</dbReference>
<dbReference type="PANTHER" id="PTHR43096">
    <property type="entry name" value="DNAJ HOMOLOG 1, MITOCHONDRIAL-RELATED"/>
    <property type="match status" value="1"/>
</dbReference>
<dbReference type="Pfam" id="PF00226">
    <property type="entry name" value="DnaJ"/>
    <property type="match status" value="1"/>
</dbReference>
<dbReference type="Pfam" id="PF01556">
    <property type="entry name" value="DnaJ_C"/>
    <property type="match status" value="1"/>
</dbReference>
<dbReference type="Pfam" id="PF00684">
    <property type="entry name" value="DnaJ_CXXCXGXG"/>
    <property type="match status" value="1"/>
</dbReference>
<dbReference type="PRINTS" id="PR00625">
    <property type="entry name" value="JDOMAIN"/>
</dbReference>
<dbReference type="SMART" id="SM00271">
    <property type="entry name" value="DnaJ"/>
    <property type="match status" value="1"/>
</dbReference>
<dbReference type="SUPFAM" id="SSF46565">
    <property type="entry name" value="Chaperone J-domain"/>
    <property type="match status" value="1"/>
</dbReference>
<dbReference type="SUPFAM" id="SSF57938">
    <property type="entry name" value="DnaJ/Hsp40 cysteine-rich domain"/>
    <property type="match status" value="1"/>
</dbReference>
<dbReference type="SUPFAM" id="SSF49493">
    <property type="entry name" value="HSP40/DnaJ peptide-binding domain"/>
    <property type="match status" value="2"/>
</dbReference>
<dbReference type="PROSITE" id="PS00636">
    <property type="entry name" value="DNAJ_1"/>
    <property type="match status" value="1"/>
</dbReference>
<dbReference type="PROSITE" id="PS50076">
    <property type="entry name" value="DNAJ_2"/>
    <property type="match status" value="1"/>
</dbReference>
<dbReference type="PROSITE" id="PS51188">
    <property type="entry name" value="ZF_CR"/>
    <property type="match status" value="1"/>
</dbReference>
<gene>
    <name evidence="1" type="primary">dnaJ</name>
    <name type="ordered locus">Cyan7425_4692</name>
</gene>
<proteinExistence type="inferred from homology"/>
<name>DNAJ_CYAP4</name>
<reference key="1">
    <citation type="journal article" date="2011" name="MBio">
        <title>Novel metabolic attributes of the genus Cyanothece, comprising a group of unicellular nitrogen-fixing Cyanobacteria.</title>
        <authorList>
            <person name="Bandyopadhyay A."/>
            <person name="Elvitigala T."/>
            <person name="Welsh E."/>
            <person name="Stockel J."/>
            <person name="Liberton M."/>
            <person name="Min H."/>
            <person name="Sherman L.A."/>
            <person name="Pakrasi H.B."/>
        </authorList>
    </citation>
    <scope>NUCLEOTIDE SEQUENCE [LARGE SCALE GENOMIC DNA]</scope>
    <source>
        <strain>PCC 7425 / ATCC 29141</strain>
    </source>
</reference>
<keyword id="KW-0143">Chaperone</keyword>
<keyword id="KW-0963">Cytoplasm</keyword>
<keyword id="KW-0235">DNA replication</keyword>
<keyword id="KW-0479">Metal-binding</keyword>
<keyword id="KW-0677">Repeat</keyword>
<keyword id="KW-0346">Stress response</keyword>
<keyword id="KW-0862">Zinc</keyword>
<keyword id="KW-0863">Zinc-finger</keyword>
<comment type="function">
    <text evidence="1">Participates actively in the response to hyperosmotic and heat shock by preventing the aggregation of stress-denatured proteins and by disaggregating proteins, also in an autonomous, DnaK-independent fashion. Unfolded proteins bind initially to DnaJ; upon interaction with the DnaJ-bound protein, DnaK hydrolyzes its bound ATP, resulting in the formation of a stable complex. GrpE releases ADP from DnaK; ATP binding to DnaK triggers the release of the substrate protein, thus completing the reaction cycle. Several rounds of ATP-dependent interactions between DnaJ, DnaK and GrpE are required for fully efficient folding. Also involved, together with DnaK and GrpE, in the DNA replication of plasmids through activation of initiation proteins.</text>
</comment>
<comment type="cofactor">
    <cofactor evidence="1">
        <name>Zn(2+)</name>
        <dbReference type="ChEBI" id="CHEBI:29105"/>
    </cofactor>
    <text evidence="1">Binds 2 Zn(2+) ions per monomer.</text>
</comment>
<comment type="subunit">
    <text evidence="1">Homodimer.</text>
</comment>
<comment type="subcellular location">
    <subcellularLocation>
        <location evidence="1">Cytoplasm</location>
    </subcellularLocation>
</comment>
<comment type="domain">
    <text evidence="1">The J domain is necessary and sufficient to stimulate DnaK ATPase activity. Zinc center 1 plays an important role in the autonomous, DnaK-independent chaperone activity of DnaJ. Zinc center 2 is essential for interaction with DnaK and for DnaJ activity.</text>
</comment>
<comment type="similarity">
    <text evidence="1">Belongs to the DnaJ family.</text>
</comment>
<evidence type="ECO:0000255" key="1">
    <source>
        <dbReference type="HAMAP-Rule" id="MF_01152"/>
    </source>
</evidence>
<organism>
    <name type="scientific">Cyanothece sp. (strain PCC 7425 / ATCC 29141)</name>
    <dbReference type="NCBI Taxonomy" id="395961"/>
    <lineage>
        <taxon>Bacteria</taxon>
        <taxon>Bacillati</taxon>
        <taxon>Cyanobacteriota</taxon>
        <taxon>Cyanophyceae</taxon>
        <taxon>Gomontiellales</taxon>
        <taxon>Cyanothecaceae</taxon>
        <taxon>Cyanothece</taxon>
    </lineage>
</organism>